<name>DAPA_ACTP7</name>
<gene>
    <name evidence="1" type="primary">dapA</name>
    <name type="ordered locus">APP7_0958</name>
</gene>
<organism>
    <name type="scientific">Actinobacillus pleuropneumoniae serotype 7 (strain AP76)</name>
    <dbReference type="NCBI Taxonomy" id="537457"/>
    <lineage>
        <taxon>Bacteria</taxon>
        <taxon>Pseudomonadati</taxon>
        <taxon>Pseudomonadota</taxon>
        <taxon>Gammaproteobacteria</taxon>
        <taxon>Pasteurellales</taxon>
        <taxon>Pasteurellaceae</taxon>
        <taxon>Actinobacillus</taxon>
    </lineage>
</organism>
<evidence type="ECO:0000255" key="1">
    <source>
        <dbReference type="HAMAP-Rule" id="MF_00418"/>
    </source>
</evidence>
<evidence type="ECO:0000305" key="2"/>
<proteinExistence type="inferred from homology"/>
<comment type="function">
    <text evidence="1">Catalyzes the condensation of (S)-aspartate-beta-semialdehyde [(S)-ASA] and pyruvate to 4-hydroxy-tetrahydrodipicolinate (HTPA).</text>
</comment>
<comment type="catalytic activity">
    <reaction evidence="1">
        <text>L-aspartate 4-semialdehyde + pyruvate = (2S,4S)-4-hydroxy-2,3,4,5-tetrahydrodipicolinate + H2O + H(+)</text>
        <dbReference type="Rhea" id="RHEA:34171"/>
        <dbReference type="ChEBI" id="CHEBI:15361"/>
        <dbReference type="ChEBI" id="CHEBI:15377"/>
        <dbReference type="ChEBI" id="CHEBI:15378"/>
        <dbReference type="ChEBI" id="CHEBI:67139"/>
        <dbReference type="ChEBI" id="CHEBI:537519"/>
        <dbReference type="EC" id="4.3.3.7"/>
    </reaction>
</comment>
<comment type="pathway">
    <text evidence="1">Amino-acid biosynthesis; L-lysine biosynthesis via DAP pathway; (S)-tetrahydrodipicolinate from L-aspartate: step 3/4.</text>
</comment>
<comment type="subunit">
    <text evidence="1">Homotetramer; dimer of dimers.</text>
</comment>
<comment type="subcellular location">
    <subcellularLocation>
        <location evidence="1">Cytoplasm</location>
    </subcellularLocation>
</comment>
<comment type="similarity">
    <text evidence="1">Belongs to the DapA family.</text>
</comment>
<comment type="caution">
    <text evidence="2">Was originally thought to be a dihydrodipicolinate synthase (DHDPS), catalyzing the condensation of (S)-aspartate-beta-semialdehyde [(S)-ASA] and pyruvate to dihydrodipicolinate (DHDP). However, it was shown in E.coli that the product of the enzymatic reaction is not dihydrodipicolinate but in fact (4S)-4-hydroxy-2,3,4,5-tetrahydro-(2S)-dipicolinic acid (HTPA), and that the consecutive dehydration reaction leading to DHDP is not spontaneous but catalyzed by DapB.</text>
</comment>
<accession>B3GXP5</accession>
<feature type="chain" id="PRO_1000124014" description="4-hydroxy-tetrahydrodipicolinate synthase">
    <location>
        <begin position="1"/>
        <end position="295"/>
    </location>
</feature>
<feature type="active site" description="Proton donor/acceptor" evidence="1">
    <location>
        <position position="136"/>
    </location>
</feature>
<feature type="active site" description="Schiff-base intermediate with substrate" evidence="1">
    <location>
        <position position="164"/>
    </location>
</feature>
<feature type="binding site" evidence="1">
    <location>
        <position position="48"/>
    </location>
    <ligand>
        <name>pyruvate</name>
        <dbReference type="ChEBI" id="CHEBI:15361"/>
    </ligand>
</feature>
<feature type="binding site" evidence="1">
    <location>
        <position position="206"/>
    </location>
    <ligand>
        <name>pyruvate</name>
        <dbReference type="ChEBI" id="CHEBI:15361"/>
    </ligand>
</feature>
<feature type="site" description="Part of a proton relay during catalysis" evidence="1">
    <location>
        <position position="47"/>
    </location>
</feature>
<feature type="site" description="Part of a proton relay during catalysis" evidence="1">
    <location>
        <position position="110"/>
    </location>
</feature>
<sequence length="295" mass="31405">MATPLFHGSIVALVTPMTHGEVNYEELKRLVEHHVQAGTHGIVSVGTTGESTTLSIDENVKVIKKTVEFADGRIPIIAGTGSNATSEAIILTKLLTNSGVAGCLSVVPYYNKPTQEGMYLHYKAIAESTDLPQILYNVPSRTGSDLKPETIGRLAEIPNIVGVKEATGDLTRLPLIKKLAGEDFIFLSGDDATGLESMKLGGQGVISVTNNVAAADMAKMCELALAGKFDEAEAINQRLMALHHDLFIEANPIPVKWAAYKLGLISEPNLRLPLTTLSEAAQPTVLAALQKAGLI</sequence>
<protein>
    <recommendedName>
        <fullName evidence="1">4-hydroxy-tetrahydrodipicolinate synthase</fullName>
        <shortName evidence="1">HTPA synthase</shortName>
        <ecNumber evidence="1">4.3.3.7</ecNumber>
    </recommendedName>
</protein>
<keyword id="KW-0028">Amino-acid biosynthesis</keyword>
<keyword id="KW-0963">Cytoplasm</keyword>
<keyword id="KW-0220">Diaminopimelate biosynthesis</keyword>
<keyword id="KW-0456">Lyase</keyword>
<keyword id="KW-0457">Lysine biosynthesis</keyword>
<keyword id="KW-0704">Schiff base</keyword>
<dbReference type="EC" id="4.3.3.7" evidence="1"/>
<dbReference type="EMBL" id="CP001091">
    <property type="protein sequence ID" value="ACE61610.1"/>
    <property type="molecule type" value="Genomic_DNA"/>
</dbReference>
<dbReference type="SMR" id="B3GXP5"/>
<dbReference type="KEGG" id="apa:APP7_0958"/>
<dbReference type="HOGENOM" id="CLU_049343_7_1_6"/>
<dbReference type="UniPathway" id="UPA00034">
    <property type="reaction ID" value="UER00017"/>
</dbReference>
<dbReference type="Proteomes" id="UP000001226">
    <property type="component" value="Chromosome"/>
</dbReference>
<dbReference type="GO" id="GO:0005829">
    <property type="term" value="C:cytosol"/>
    <property type="evidence" value="ECO:0007669"/>
    <property type="project" value="TreeGrafter"/>
</dbReference>
<dbReference type="GO" id="GO:0008840">
    <property type="term" value="F:4-hydroxy-tetrahydrodipicolinate synthase activity"/>
    <property type="evidence" value="ECO:0007669"/>
    <property type="project" value="UniProtKB-UniRule"/>
</dbReference>
<dbReference type="GO" id="GO:0019877">
    <property type="term" value="P:diaminopimelate biosynthetic process"/>
    <property type="evidence" value="ECO:0007669"/>
    <property type="project" value="UniProtKB-UniRule"/>
</dbReference>
<dbReference type="GO" id="GO:0009089">
    <property type="term" value="P:lysine biosynthetic process via diaminopimelate"/>
    <property type="evidence" value="ECO:0007669"/>
    <property type="project" value="UniProtKB-UniRule"/>
</dbReference>
<dbReference type="CDD" id="cd00950">
    <property type="entry name" value="DHDPS"/>
    <property type="match status" value="1"/>
</dbReference>
<dbReference type="Gene3D" id="3.20.20.70">
    <property type="entry name" value="Aldolase class I"/>
    <property type="match status" value="1"/>
</dbReference>
<dbReference type="HAMAP" id="MF_00418">
    <property type="entry name" value="DapA"/>
    <property type="match status" value="1"/>
</dbReference>
<dbReference type="InterPro" id="IPR013785">
    <property type="entry name" value="Aldolase_TIM"/>
</dbReference>
<dbReference type="InterPro" id="IPR005263">
    <property type="entry name" value="DapA"/>
</dbReference>
<dbReference type="InterPro" id="IPR002220">
    <property type="entry name" value="DapA-like"/>
</dbReference>
<dbReference type="InterPro" id="IPR020625">
    <property type="entry name" value="Schiff_base-form_aldolases_AS"/>
</dbReference>
<dbReference type="InterPro" id="IPR020624">
    <property type="entry name" value="Schiff_base-form_aldolases_CS"/>
</dbReference>
<dbReference type="NCBIfam" id="TIGR00674">
    <property type="entry name" value="dapA"/>
    <property type="match status" value="1"/>
</dbReference>
<dbReference type="PANTHER" id="PTHR12128:SF66">
    <property type="entry name" value="4-HYDROXY-2-OXOGLUTARATE ALDOLASE, MITOCHONDRIAL"/>
    <property type="match status" value="1"/>
</dbReference>
<dbReference type="PANTHER" id="PTHR12128">
    <property type="entry name" value="DIHYDRODIPICOLINATE SYNTHASE"/>
    <property type="match status" value="1"/>
</dbReference>
<dbReference type="Pfam" id="PF00701">
    <property type="entry name" value="DHDPS"/>
    <property type="match status" value="1"/>
</dbReference>
<dbReference type="PIRSF" id="PIRSF001365">
    <property type="entry name" value="DHDPS"/>
    <property type="match status" value="1"/>
</dbReference>
<dbReference type="PRINTS" id="PR00146">
    <property type="entry name" value="DHPICSNTHASE"/>
</dbReference>
<dbReference type="SMART" id="SM01130">
    <property type="entry name" value="DHDPS"/>
    <property type="match status" value="1"/>
</dbReference>
<dbReference type="SUPFAM" id="SSF51569">
    <property type="entry name" value="Aldolase"/>
    <property type="match status" value="1"/>
</dbReference>
<dbReference type="PROSITE" id="PS00665">
    <property type="entry name" value="DHDPS_1"/>
    <property type="match status" value="1"/>
</dbReference>
<dbReference type="PROSITE" id="PS00666">
    <property type="entry name" value="DHDPS_2"/>
    <property type="match status" value="1"/>
</dbReference>
<reference key="1">
    <citation type="submission" date="2008-06" db="EMBL/GenBank/DDBJ databases">
        <title>Genome and proteome analysis of A. pleuropneumoniae serotype 7.</title>
        <authorList>
            <person name="Linke B."/>
            <person name="Buettner F."/>
            <person name="Martinez-Arias R."/>
            <person name="Goesmann A."/>
            <person name="Baltes N."/>
            <person name="Tegetmeyer H."/>
            <person name="Singh M."/>
            <person name="Gerlach G.F."/>
        </authorList>
    </citation>
    <scope>NUCLEOTIDE SEQUENCE [LARGE SCALE GENOMIC DNA]</scope>
    <source>
        <strain>AP76</strain>
    </source>
</reference>